<organism>
    <name type="scientific">Mus musculus</name>
    <name type="common">Mouse</name>
    <dbReference type="NCBI Taxonomy" id="10090"/>
    <lineage>
        <taxon>Eukaryota</taxon>
        <taxon>Metazoa</taxon>
        <taxon>Chordata</taxon>
        <taxon>Craniata</taxon>
        <taxon>Vertebrata</taxon>
        <taxon>Euteleostomi</taxon>
        <taxon>Mammalia</taxon>
        <taxon>Eutheria</taxon>
        <taxon>Euarchontoglires</taxon>
        <taxon>Glires</taxon>
        <taxon>Rodentia</taxon>
        <taxon>Myomorpha</taxon>
        <taxon>Muroidea</taxon>
        <taxon>Muridae</taxon>
        <taxon>Murinae</taxon>
        <taxon>Mus</taxon>
        <taxon>Mus</taxon>
    </lineage>
</organism>
<comment type="function">
    <text evidence="2 4">The small GTPases Rab are key regulators of intracellular membrane trafficking, from the formation of transport vesicles to their fusion with membranes. Rabs cycle between an inactive GDP-bound form and an active GTP-bound form that is able to recruit to membranes different set of downstream effectors directly responsible for vesicle formation, movement, tethering and fusion (By similarity). Plays a role in the initial events of the autophagic vacuole development which take place at specialized regions of the endoplasmic reticulum (By similarity). Regulates vesicular transport between the endoplasmic reticulum and successive Golgi compartments. Required to modulate the compacted morphology of the Golgi. Promotes the recruitment of lipid phosphatase MTMR6 to the endoplasmic reticulum-Golgi intermediate compartment (By similarity).</text>
</comment>
<comment type="catalytic activity">
    <reaction evidence="3">
        <text>GTP + H2O = GDP + phosphate + H(+)</text>
        <dbReference type="Rhea" id="RHEA:19669"/>
        <dbReference type="ChEBI" id="CHEBI:15377"/>
        <dbReference type="ChEBI" id="CHEBI:15378"/>
        <dbReference type="ChEBI" id="CHEBI:37565"/>
        <dbReference type="ChEBI" id="CHEBI:43474"/>
        <dbReference type="ChEBI" id="CHEBI:58189"/>
        <dbReference type="EC" id="3.6.5.2"/>
    </reaction>
    <physiologicalReaction direction="left-to-right" evidence="3">
        <dbReference type="Rhea" id="RHEA:19670"/>
    </physiologicalReaction>
</comment>
<comment type="cofactor">
    <cofactor evidence="4">
        <name>Mg(2+)</name>
        <dbReference type="ChEBI" id="CHEBI:18420"/>
    </cofactor>
</comment>
<comment type="activity regulation">
    <text evidence="4">Regulated by guanine nucleotide exchange factors (GEFs) which promote the exchange of bound GDP for free GTP. Regulated by GTPase activating proteins (GAPs) including TBC1D20 which increases the GTP hydrolysis activity. Inhibited by GDP dissociation inhibitors (GDIs).</text>
</comment>
<comment type="subunit">
    <text evidence="4 7">Interacts with MICAL1 and MICAL2. Interacts (GTP-bound form) with MICALCL, MICAL1 and MILCAL3. Interacts with GDI1; the interaction requires the GDP-bound state. Interacts with CHM/REP1; the interaction requires the GDP-bound form and is necessary for prenylation by GGTase II. Interacts with RabGAP TBC1D20 (By similarity). Interacts (in GDP-bound form) with lipid phosphatase MTMR6 (via GRAM domain); the interaction regulates MTMR6 recruitment to the endoplasmic reticulum-Golgi intermediate compartment (PubMed:23188820). Interacts (in GDP-bound form) with lipid phosphatase MTMR7 (PubMed:23188820).</text>
</comment>
<comment type="subcellular location">
    <subcellularLocation>
        <location evidence="4">Cytoplasm</location>
    </subcellularLocation>
    <subcellularLocation>
        <location evidence="4">Membrane</location>
        <topology evidence="4">Lipid-anchor</topology>
        <orientation evidence="4">Cytoplasmic side</orientation>
    </subcellularLocation>
    <subcellularLocation>
        <location evidence="4">Preautophagosomal structure membrane</location>
        <topology evidence="4">Lipid-anchor</topology>
        <orientation evidence="4">Cytoplasmic side</orientation>
    </subcellularLocation>
    <subcellularLocation>
        <location evidence="2">Cytoplasm</location>
        <location evidence="2">Perinuclear region</location>
    </subcellularLocation>
    <text evidence="2 4">Targeted by REP1 to membranes of specific subcellular compartments including endoplasmic reticulum, Golgi apparatus, and intermediate vesicles between these two compartments. In the GDP-form, colocalizes with GDI in the cytoplasm (By similarity). Co-localizes with MTMR6 to the endoplasmic reticulum-Golgi intermediate compartment and to the peri-Golgi region (By similarity).</text>
</comment>
<comment type="domain">
    <text evidence="4">Switch 1, switch 2 and the interswitch regions are characteristic of Rab GTPases and mediate the interactions with Rab downstream effectors. The switch regions undergo conformational changes upon nucleotide binding which drives interaction with specific sets of effector proteins, with most effectors only binding to GTP-bound Rab.</text>
</comment>
<comment type="PTM">
    <text evidence="4">Prenylated; by GGTase II, only after interaction of the substrate with Rab escort protein 1 (REP1).</text>
</comment>
<comment type="miscellaneous">
    <text evidence="4">Rab-1B binds GTP and GDP and possesses intrinsic GTPase activity.</text>
</comment>
<comment type="similarity">
    <text evidence="8">Belongs to the small GTPase superfamily. Rab family.</text>
</comment>
<accession>Q9D1G1</accession>
<accession>Q3U0N1</accession>
<protein>
    <recommendedName>
        <fullName>Ras-related protein Rab-1B</fullName>
        <ecNumber evidence="3">3.6.5.2</ecNumber>
    </recommendedName>
</protein>
<gene>
    <name type="primary">Rab1b</name>
</gene>
<dbReference type="EC" id="3.6.5.2" evidence="3"/>
<dbReference type="EMBL" id="AK003609">
    <property type="protein sequence ID" value="BAB22888.1"/>
    <property type="molecule type" value="mRNA"/>
</dbReference>
<dbReference type="EMBL" id="AK156726">
    <property type="protein sequence ID" value="BAE33821.1"/>
    <property type="molecule type" value="mRNA"/>
</dbReference>
<dbReference type="EMBL" id="BC016408">
    <property type="protein sequence ID" value="AAH16408.1"/>
    <property type="molecule type" value="mRNA"/>
</dbReference>
<dbReference type="CCDS" id="CCDS29452.1"/>
<dbReference type="RefSeq" id="NP_083852.1">
    <property type="nucleotide sequence ID" value="NM_029576.3"/>
</dbReference>
<dbReference type="SMR" id="Q9D1G1"/>
<dbReference type="BioGRID" id="218071">
    <property type="interactions" value="9"/>
</dbReference>
<dbReference type="FunCoup" id="Q9D1G1">
    <property type="interactions" value="2710"/>
</dbReference>
<dbReference type="IntAct" id="Q9D1G1">
    <property type="interactions" value="17"/>
</dbReference>
<dbReference type="MINT" id="Q9D1G1"/>
<dbReference type="STRING" id="10090.ENSMUSP00000025804"/>
<dbReference type="GlyGen" id="Q9D1G1">
    <property type="glycosylation" value="3 sites, 2 N-linked glycans (2 sites), 1 O-linked glycan (1 site)"/>
</dbReference>
<dbReference type="iPTMnet" id="Q9D1G1"/>
<dbReference type="MetOSite" id="Q9D1G1"/>
<dbReference type="PhosphoSitePlus" id="Q9D1G1"/>
<dbReference type="SwissPalm" id="Q9D1G1"/>
<dbReference type="jPOST" id="Q9D1G1"/>
<dbReference type="PaxDb" id="10090-ENSMUSP00000025804"/>
<dbReference type="ProteomicsDB" id="253142"/>
<dbReference type="Pumba" id="Q9D1G1"/>
<dbReference type="Antibodypedia" id="4132">
    <property type="antibodies" value="296 antibodies from 32 providers"/>
</dbReference>
<dbReference type="DNASU" id="76308"/>
<dbReference type="Ensembl" id="ENSMUST00000025804.7">
    <property type="protein sequence ID" value="ENSMUSP00000025804.6"/>
    <property type="gene ID" value="ENSMUSG00000024870.7"/>
</dbReference>
<dbReference type="GeneID" id="76308"/>
<dbReference type="KEGG" id="mmu:76308"/>
<dbReference type="UCSC" id="uc008gcf.1">
    <property type="organism name" value="mouse"/>
</dbReference>
<dbReference type="AGR" id="MGI:1923558"/>
<dbReference type="CTD" id="81876"/>
<dbReference type="MGI" id="MGI:1923558">
    <property type="gene designation" value="Rab1b"/>
</dbReference>
<dbReference type="VEuPathDB" id="HostDB:ENSMUSG00000024870"/>
<dbReference type="eggNOG" id="KOG0084">
    <property type="taxonomic scope" value="Eukaryota"/>
</dbReference>
<dbReference type="GeneTree" id="ENSGT00940000155078"/>
<dbReference type="HOGENOM" id="CLU_041217_23_1_1"/>
<dbReference type="InParanoid" id="Q9D1G1"/>
<dbReference type="OMA" id="PDYHYLF"/>
<dbReference type="OrthoDB" id="7417at9989"/>
<dbReference type="PhylomeDB" id="Q9D1G1"/>
<dbReference type="TreeFam" id="TF300097"/>
<dbReference type="Reactome" id="R-MMU-162658">
    <property type="pathway name" value="Golgi Cisternae Pericentriolar Stack Reorganization"/>
</dbReference>
<dbReference type="Reactome" id="R-MMU-204005">
    <property type="pathway name" value="COPII-mediated vesicle transport"/>
</dbReference>
<dbReference type="Reactome" id="R-MMU-6807878">
    <property type="pathway name" value="COPI-mediated anterograde transport"/>
</dbReference>
<dbReference type="Reactome" id="R-MMU-6811434">
    <property type="pathway name" value="COPI-dependent Golgi-to-ER retrograde traffic"/>
</dbReference>
<dbReference type="Reactome" id="R-MMU-8873719">
    <property type="pathway name" value="RAB geranylgeranylation"/>
</dbReference>
<dbReference type="Reactome" id="R-MMU-8876198">
    <property type="pathway name" value="RAB GEFs exchange GTP for GDP on RABs"/>
</dbReference>
<dbReference type="BioGRID-ORCS" id="76308">
    <property type="hits" value="6 hits in 76 CRISPR screens"/>
</dbReference>
<dbReference type="CD-CODE" id="CE726F99">
    <property type="entry name" value="Postsynaptic density"/>
</dbReference>
<dbReference type="ChiTaRS" id="Rab1b">
    <property type="organism name" value="mouse"/>
</dbReference>
<dbReference type="PRO" id="PR:Q9D1G1"/>
<dbReference type="Proteomes" id="UP000000589">
    <property type="component" value="Chromosome 19"/>
</dbReference>
<dbReference type="RNAct" id="Q9D1G1">
    <property type="molecule type" value="protein"/>
</dbReference>
<dbReference type="Bgee" id="ENSMUSG00000024870">
    <property type="expression patterns" value="Expressed in lip and 249 other cell types or tissues"/>
</dbReference>
<dbReference type="ExpressionAtlas" id="Q9D1G1">
    <property type="expression patterns" value="baseline and differential"/>
</dbReference>
<dbReference type="GO" id="GO:0005793">
    <property type="term" value="C:endoplasmic reticulum-Golgi intermediate compartment"/>
    <property type="evidence" value="ECO:0000314"/>
    <property type="project" value="MGI"/>
</dbReference>
<dbReference type="GO" id="GO:0005794">
    <property type="term" value="C:Golgi apparatus"/>
    <property type="evidence" value="ECO:0007669"/>
    <property type="project" value="Ensembl"/>
</dbReference>
<dbReference type="GO" id="GO:0005739">
    <property type="term" value="C:mitochondrion"/>
    <property type="evidence" value="ECO:0007005"/>
    <property type="project" value="MGI"/>
</dbReference>
<dbReference type="GO" id="GO:0048471">
    <property type="term" value="C:perinuclear region of cytoplasm"/>
    <property type="evidence" value="ECO:0007669"/>
    <property type="project" value="UniProtKB-SubCell"/>
</dbReference>
<dbReference type="GO" id="GO:0034045">
    <property type="term" value="C:phagophore assembly site membrane"/>
    <property type="evidence" value="ECO:0007669"/>
    <property type="project" value="UniProtKB-SubCell"/>
</dbReference>
<dbReference type="GO" id="GO:0003925">
    <property type="term" value="F:G protein activity"/>
    <property type="evidence" value="ECO:0007669"/>
    <property type="project" value="UniProtKB-EC"/>
</dbReference>
<dbReference type="GO" id="GO:0005525">
    <property type="term" value="F:GTP binding"/>
    <property type="evidence" value="ECO:0000250"/>
    <property type="project" value="UniProtKB"/>
</dbReference>
<dbReference type="GO" id="GO:0006914">
    <property type="term" value="P:autophagy"/>
    <property type="evidence" value="ECO:0007669"/>
    <property type="project" value="UniProtKB-KW"/>
</dbReference>
<dbReference type="GO" id="GO:0006888">
    <property type="term" value="P:endoplasmic reticulum to Golgi vesicle-mediated transport"/>
    <property type="evidence" value="ECO:0007669"/>
    <property type="project" value="Ensembl"/>
</dbReference>
<dbReference type="GO" id="GO:0007030">
    <property type="term" value="P:Golgi organization"/>
    <property type="evidence" value="ECO:0000250"/>
    <property type="project" value="UniProtKB"/>
</dbReference>
<dbReference type="GO" id="GO:1903020">
    <property type="term" value="P:positive regulation of glycoprotein metabolic process"/>
    <property type="evidence" value="ECO:0007669"/>
    <property type="project" value="Ensembl"/>
</dbReference>
<dbReference type="GO" id="GO:0015031">
    <property type="term" value="P:protein transport"/>
    <property type="evidence" value="ECO:0007669"/>
    <property type="project" value="UniProtKB-KW"/>
</dbReference>
<dbReference type="GO" id="GO:2000785">
    <property type="term" value="P:regulation of autophagosome assembly"/>
    <property type="evidence" value="ECO:0007669"/>
    <property type="project" value="Ensembl"/>
</dbReference>
<dbReference type="GO" id="GO:0019068">
    <property type="term" value="P:virion assembly"/>
    <property type="evidence" value="ECO:0007669"/>
    <property type="project" value="Ensembl"/>
</dbReference>
<dbReference type="CDD" id="cd01869">
    <property type="entry name" value="Rab1_Ypt1"/>
    <property type="match status" value="1"/>
</dbReference>
<dbReference type="FunFam" id="3.40.50.300:FF:000069">
    <property type="entry name" value="Ras GTP-binding protein YPT1"/>
    <property type="match status" value="1"/>
</dbReference>
<dbReference type="Gene3D" id="3.40.50.300">
    <property type="entry name" value="P-loop containing nucleotide triphosphate hydrolases"/>
    <property type="match status" value="1"/>
</dbReference>
<dbReference type="InterPro" id="IPR027417">
    <property type="entry name" value="P-loop_NTPase"/>
</dbReference>
<dbReference type="InterPro" id="IPR050227">
    <property type="entry name" value="Rab"/>
</dbReference>
<dbReference type="InterPro" id="IPR005225">
    <property type="entry name" value="Small_GTP-bd"/>
</dbReference>
<dbReference type="InterPro" id="IPR001806">
    <property type="entry name" value="Small_GTPase"/>
</dbReference>
<dbReference type="NCBIfam" id="TIGR00231">
    <property type="entry name" value="small_GTP"/>
    <property type="match status" value="1"/>
</dbReference>
<dbReference type="PANTHER" id="PTHR47977">
    <property type="entry name" value="RAS-RELATED PROTEIN RAB"/>
    <property type="match status" value="1"/>
</dbReference>
<dbReference type="Pfam" id="PF00071">
    <property type="entry name" value="Ras"/>
    <property type="match status" value="1"/>
</dbReference>
<dbReference type="PRINTS" id="PR00449">
    <property type="entry name" value="RASTRNSFRMNG"/>
</dbReference>
<dbReference type="SMART" id="SM00177">
    <property type="entry name" value="ARF"/>
    <property type="match status" value="1"/>
</dbReference>
<dbReference type="SMART" id="SM00175">
    <property type="entry name" value="RAB"/>
    <property type="match status" value="1"/>
</dbReference>
<dbReference type="SMART" id="SM00176">
    <property type="entry name" value="RAN"/>
    <property type="match status" value="1"/>
</dbReference>
<dbReference type="SMART" id="SM00173">
    <property type="entry name" value="RAS"/>
    <property type="match status" value="1"/>
</dbReference>
<dbReference type="SMART" id="SM00174">
    <property type="entry name" value="RHO"/>
    <property type="match status" value="1"/>
</dbReference>
<dbReference type="SUPFAM" id="SSF52540">
    <property type="entry name" value="P-loop containing nucleoside triphosphate hydrolases"/>
    <property type="match status" value="1"/>
</dbReference>
<dbReference type="PROSITE" id="PS51419">
    <property type="entry name" value="RAB"/>
    <property type="match status" value="1"/>
</dbReference>
<sequence length="201" mass="22187">MNPEYDYLFKLLLIGDSGVGKSCLLLRFADDTYTESYISTIGVDFKIRTIELDGKTIKLQIWDTAGQERFRTITSSYYRGAHGIIVVYDVTDQESYANVKQWLQEIDRYASENVNKLLVGNKSDLTTKKVVDNTTAKEFADSLGVPFLETSAKNATNVEQAFMTMAAEIKKRMGPGAASGGERPNLKIDSTPVKPASGGCC</sequence>
<name>RAB1B_MOUSE</name>
<reference key="1">
    <citation type="journal article" date="2005" name="Science">
        <title>The transcriptional landscape of the mammalian genome.</title>
        <authorList>
            <person name="Carninci P."/>
            <person name="Kasukawa T."/>
            <person name="Katayama S."/>
            <person name="Gough J."/>
            <person name="Frith M.C."/>
            <person name="Maeda N."/>
            <person name="Oyama R."/>
            <person name="Ravasi T."/>
            <person name="Lenhard B."/>
            <person name="Wells C."/>
            <person name="Kodzius R."/>
            <person name="Shimokawa K."/>
            <person name="Bajic V.B."/>
            <person name="Brenner S.E."/>
            <person name="Batalov S."/>
            <person name="Forrest A.R."/>
            <person name="Zavolan M."/>
            <person name="Davis M.J."/>
            <person name="Wilming L.G."/>
            <person name="Aidinis V."/>
            <person name="Allen J.E."/>
            <person name="Ambesi-Impiombato A."/>
            <person name="Apweiler R."/>
            <person name="Aturaliya R.N."/>
            <person name="Bailey T.L."/>
            <person name="Bansal M."/>
            <person name="Baxter L."/>
            <person name="Beisel K.W."/>
            <person name="Bersano T."/>
            <person name="Bono H."/>
            <person name="Chalk A.M."/>
            <person name="Chiu K.P."/>
            <person name="Choudhary V."/>
            <person name="Christoffels A."/>
            <person name="Clutterbuck D.R."/>
            <person name="Crowe M.L."/>
            <person name="Dalla E."/>
            <person name="Dalrymple B.P."/>
            <person name="de Bono B."/>
            <person name="Della Gatta G."/>
            <person name="di Bernardo D."/>
            <person name="Down T."/>
            <person name="Engstrom P."/>
            <person name="Fagiolini M."/>
            <person name="Faulkner G."/>
            <person name="Fletcher C.F."/>
            <person name="Fukushima T."/>
            <person name="Furuno M."/>
            <person name="Futaki S."/>
            <person name="Gariboldi M."/>
            <person name="Georgii-Hemming P."/>
            <person name="Gingeras T.R."/>
            <person name="Gojobori T."/>
            <person name="Green R.E."/>
            <person name="Gustincich S."/>
            <person name="Harbers M."/>
            <person name="Hayashi Y."/>
            <person name="Hensch T.K."/>
            <person name="Hirokawa N."/>
            <person name="Hill D."/>
            <person name="Huminiecki L."/>
            <person name="Iacono M."/>
            <person name="Ikeo K."/>
            <person name="Iwama A."/>
            <person name="Ishikawa T."/>
            <person name="Jakt M."/>
            <person name="Kanapin A."/>
            <person name="Katoh M."/>
            <person name="Kawasawa Y."/>
            <person name="Kelso J."/>
            <person name="Kitamura H."/>
            <person name="Kitano H."/>
            <person name="Kollias G."/>
            <person name="Krishnan S.P."/>
            <person name="Kruger A."/>
            <person name="Kummerfeld S.K."/>
            <person name="Kurochkin I.V."/>
            <person name="Lareau L.F."/>
            <person name="Lazarevic D."/>
            <person name="Lipovich L."/>
            <person name="Liu J."/>
            <person name="Liuni S."/>
            <person name="McWilliam S."/>
            <person name="Madan Babu M."/>
            <person name="Madera M."/>
            <person name="Marchionni L."/>
            <person name="Matsuda H."/>
            <person name="Matsuzawa S."/>
            <person name="Miki H."/>
            <person name="Mignone F."/>
            <person name="Miyake S."/>
            <person name="Morris K."/>
            <person name="Mottagui-Tabar S."/>
            <person name="Mulder N."/>
            <person name="Nakano N."/>
            <person name="Nakauchi H."/>
            <person name="Ng P."/>
            <person name="Nilsson R."/>
            <person name="Nishiguchi S."/>
            <person name="Nishikawa S."/>
            <person name="Nori F."/>
            <person name="Ohara O."/>
            <person name="Okazaki Y."/>
            <person name="Orlando V."/>
            <person name="Pang K.C."/>
            <person name="Pavan W.J."/>
            <person name="Pavesi G."/>
            <person name="Pesole G."/>
            <person name="Petrovsky N."/>
            <person name="Piazza S."/>
            <person name="Reed J."/>
            <person name="Reid J.F."/>
            <person name="Ring B.Z."/>
            <person name="Ringwald M."/>
            <person name="Rost B."/>
            <person name="Ruan Y."/>
            <person name="Salzberg S.L."/>
            <person name="Sandelin A."/>
            <person name="Schneider C."/>
            <person name="Schoenbach C."/>
            <person name="Sekiguchi K."/>
            <person name="Semple C.A."/>
            <person name="Seno S."/>
            <person name="Sessa L."/>
            <person name="Sheng Y."/>
            <person name="Shibata Y."/>
            <person name="Shimada H."/>
            <person name="Shimada K."/>
            <person name="Silva D."/>
            <person name="Sinclair B."/>
            <person name="Sperling S."/>
            <person name="Stupka E."/>
            <person name="Sugiura K."/>
            <person name="Sultana R."/>
            <person name="Takenaka Y."/>
            <person name="Taki K."/>
            <person name="Tammoja K."/>
            <person name="Tan S.L."/>
            <person name="Tang S."/>
            <person name="Taylor M.S."/>
            <person name="Tegner J."/>
            <person name="Teichmann S.A."/>
            <person name="Ueda H.R."/>
            <person name="van Nimwegen E."/>
            <person name="Verardo R."/>
            <person name="Wei C.L."/>
            <person name="Yagi K."/>
            <person name="Yamanishi H."/>
            <person name="Zabarovsky E."/>
            <person name="Zhu S."/>
            <person name="Zimmer A."/>
            <person name="Hide W."/>
            <person name="Bult C."/>
            <person name="Grimmond S.M."/>
            <person name="Teasdale R.D."/>
            <person name="Liu E.T."/>
            <person name="Brusic V."/>
            <person name="Quackenbush J."/>
            <person name="Wahlestedt C."/>
            <person name="Mattick J.S."/>
            <person name="Hume D.A."/>
            <person name="Kai C."/>
            <person name="Sasaki D."/>
            <person name="Tomaru Y."/>
            <person name="Fukuda S."/>
            <person name="Kanamori-Katayama M."/>
            <person name="Suzuki M."/>
            <person name="Aoki J."/>
            <person name="Arakawa T."/>
            <person name="Iida J."/>
            <person name="Imamura K."/>
            <person name="Itoh M."/>
            <person name="Kato T."/>
            <person name="Kawaji H."/>
            <person name="Kawagashira N."/>
            <person name="Kawashima T."/>
            <person name="Kojima M."/>
            <person name="Kondo S."/>
            <person name="Konno H."/>
            <person name="Nakano K."/>
            <person name="Ninomiya N."/>
            <person name="Nishio T."/>
            <person name="Okada M."/>
            <person name="Plessy C."/>
            <person name="Shibata K."/>
            <person name="Shiraki T."/>
            <person name="Suzuki S."/>
            <person name="Tagami M."/>
            <person name="Waki K."/>
            <person name="Watahiki A."/>
            <person name="Okamura-Oho Y."/>
            <person name="Suzuki H."/>
            <person name="Kawai J."/>
            <person name="Hayashizaki Y."/>
        </authorList>
    </citation>
    <scope>NUCLEOTIDE SEQUENCE [LARGE SCALE MRNA]</scope>
    <source>
        <strain>C57BL/6J</strain>
        <strain>NOD</strain>
        <tissue>Embryo</tissue>
        <tissue>Spleen</tissue>
    </source>
</reference>
<reference key="2">
    <citation type="journal article" date="2004" name="Genome Res.">
        <title>The status, quality, and expansion of the NIH full-length cDNA project: the Mammalian Gene Collection (MGC).</title>
        <authorList>
            <consortium name="The MGC Project Team"/>
        </authorList>
    </citation>
    <scope>NUCLEOTIDE SEQUENCE [LARGE SCALE MRNA]</scope>
    <source>
        <tissue>Kidney</tissue>
    </source>
</reference>
<reference key="3">
    <citation type="submission" date="2007-04" db="UniProtKB">
        <authorList>
            <person name="Lubec G."/>
            <person name="Kang S.U."/>
        </authorList>
    </citation>
    <scope>PROTEIN SEQUENCE OF 11-21; 59-69; 72-100; 109-122; 138-153 AND 173-187</scope>
    <scope>IDENTIFICATION BY MASS SPECTROMETRY</scope>
    <source>
        <strain>C57BL/6J</strain>
        <tissue>Brain</tissue>
    </source>
</reference>
<reference key="4">
    <citation type="journal article" date="2010" name="Cell">
        <title>A tissue-specific atlas of mouse protein phosphorylation and expression.</title>
        <authorList>
            <person name="Huttlin E.L."/>
            <person name="Jedrychowski M.P."/>
            <person name="Elias J.E."/>
            <person name="Goswami T."/>
            <person name="Rad R."/>
            <person name="Beausoleil S.A."/>
            <person name="Villen J."/>
            <person name="Haas W."/>
            <person name="Sowa M.E."/>
            <person name="Gygi S.P."/>
        </authorList>
    </citation>
    <scope>IDENTIFICATION BY MASS SPECTROMETRY [LARGE SCALE ANALYSIS]</scope>
    <source>
        <tissue>Brain</tissue>
        <tissue>Brown adipose tissue</tissue>
        <tissue>Heart</tissue>
        <tissue>Kidney</tissue>
        <tissue>Liver</tissue>
        <tissue>Lung</tissue>
        <tissue>Pancreas</tissue>
        <tissue>Spleen</tissue>
        <tissue>Testis</tissue>
    </source>
</reference>
<reference key="5">
    <citation type="journal article" date="2013" name="J. Biol. Chem.">
        <title>Phosphatidylinositol 3-phosphatase myotubularin-related protein 6 (MTMR6) is regulated by small GTPase Rab1B in the early secretory and autophagic pathways.</title>
        <authorList>
            <person name="Mochizuki Y."/>
            <person name="Ohashi R."/>
            <person name="Kawamura T."/>
            <person name="Iwanari H."/>
            <person name="Kodama T."/>
            <person name="Naito M."/>
            <person name="Hamakubo T."/>
        </authorList>
    </citation>
    <scope>INTERACTION WITH MTMR6 AND MTMR7</scope>
    <scope>MUTAGENESIS OF SER-22 AND GLN-67</scope>
</reference>
<evidence type="ECO:0000250" key="1"/>
<evidence type="ECO:0000250" key="2">
    <source>
        <dbReference type="UniProtKB" id="P10536"/>
    </source>
</evidence>
<evidence type="ECO:0000250" key="3">
    <source>
        <dbReference type="UniProtKB" id="P62820"/>
    </source>
</evidence>
<evidence type="ECO:0000250" key="4">
    <source>
        <dbReference type="UniProtKB" id="Q9H0U4"/>
    </source>
</evidence>
<evidence type="ECO:0000255" key="5"/>
<evidence type="ECO:0000256" key="6">
    <source>
        <dbReference type="SAM" id="MobiDB-lite"/>
    </source>
</evidence>
<evidence type="ECO:0000269" key="7">
    <source>
    </source>
</evidence>
<evidence type="ECO:0000305" key="8"/>
<feature type="chain" id="PRO_0000121062" description="Ras-related protein Rab-1B">
    <location>
        <begin position="1"/>
        <end position="201"/>
    </location>
</feature>
<feature type="region of interest" description="Switch 2 region; required for interaction with REP1/CHM" evidence="4">
    <location>
        <begin position="64"/>
        <end position="83"/>
    </location>
</feature>
<feature type="region of interest" description="Disordered" evidence="6">
    <location>
        <begin position="174"/>
        <end position="201"/>
    </location>
</feature>
<feature type="short sequence motif" description="Switch 1" evidence="4">
    <location>
        <begin position="30"/>
        <end position="45"/>
    </location>
</feature>
<feature type="short sequence motif" description="Switch 2" evidence="4">
    <location>
        <begin position="65"/>
        <end position="80"/>
    </location>
</feature>
<feature type="binding site" evidence="4">
    <location>
        <position position="17"/>
    </location>
    <ligand>
        <name>GTP</name>
        <dbReference type="ChEBI" id="CHEBI:37565"/>
    </ligand>
</feature>
<feature type="binding site" evidence="4">
    <location>
        <position position="18"/>
    </location>
    <ligand>
        <name>GTP</name>
        <dbReference type="ChEBI" id="CHEBI:37565"/>
    </ligand>
</feature>
<feature type="binding site" evidence="4">
    <location>
        <position position="19"/>
    </location>
    <ligand>
        <name>GTP</name>
        <dbReference type="ChEBI" id="CHEBI:37565"/>
    </ligand>
</feature>
<feature type="binding site" evidence="4">
    <location>
        <position position="20"/>
    </location>
    <ligand>
        <name>GTP</name>
        <dbReference type="ChEBI" id="CHEBI:37565"/>
    </ligand>
</feature>
<feature type="binding site" evidence="4">
    <location>
        <position position="21"/>
    </location>
    <ligand>
        <name>GTP</name>
        <dbReference type="ChEBI" id="CHEBI:37565"/>
    </ligand>
</feature>
<feature type="binding site" evidence="4">
    <location>
        <position position="22"/>
    </location>
    <ligand>
        <name>GTP</name>
        <dbReference type="ChEBI" id="CHEBI:37565"/>
    </ligand>
</feature>
<feature type="binding site" evidence="4">
    <location>
        <position position="22"/>
    </location>
    <ligand>
        <name>Mg(2+)</name>
        <dbReference type="ChEBI" id="CHEBI:18420"/>
    </ligand>
</feature>
<feature type="binding site" evidence="4">
    <location>
        <position position="23"/>
    </location>
    <ligand>
        <name>GTP</name>
        <dbReference type="ChEBI" id="CHEBI:37565"/>
    </ligand>
</feature>
<feature type="binding site" evidence="4">
    <location>
        <position position="33"/>
    </location>
    <ligand>
        <name>GTP</name>
        <dbReference type="ChEBI" id="CHEBI:37565"/>
    </ligand>
</feature>
<feature type="binding site" evidence="4">
    <location>
        <position position="34"/>
    </location>
    <ligand>
        <name>GTP</name>
        <dbReference type="ChEBI" id="CHEBI:37565"/>
    </ligand>
</feature>
<feature type="binding site" evidence="4">
    <location>
        <position position="35"/>
    </location>
    <ligand>
        <name>GTP</name>
        <dbReference type="ChEBI" id="CHEBI:37565"/>
    </ligand>
</feature>
<feature type="binding site" evidence="4">
    <location>
        <position position="36"/>
    </location>
    <ligand>
        <name>GTP</name>
        <dbReference type="ChEBI" id="CHEBI:37565"/>
    </ligand>
</feature>
<feature type="binding site" evidence="4">
    <location>
        <position position="39"/>
    </location>
    <ligand>
        <name>GTP</name>
        <dbReference type="ChEBI" id="CHEBI:37565"/>
    </ligand>
</feature>
<feature type="binding site" evidence="4">
    <location>
        <position position="40"/>
    </location>
    <ligand>
        <name>GTP</name>
        <dbReference type="ChEBI" id="CHEBI:37565"/>
    </ligand>
</feature>
<feature type="binding site" evidence="4">
    <location>
        <position position="40"/>
    </location>
    <ligand>
        <name>Mg(2+)</name>
        <dbReference type="ChEBI" id="CHEBI:18420"/>
    </ligand>
</feature>
<feature type="binding site" evidence="4">
    <location>
        <position position="63"/>
    </location>
    <ligand>
        <name>Mg(2+)</name>
        <dbReference type="ChEBI" id="CHEBI:18420"/>
    </ligand>
</feature>
<feature type="binding site" evidence="4">
    <location>
        <position position="66"/>
    </location>
    <ligand>
        <name>GTP</name>
        <dbReference type="ChEBI" id="CHEBI:37565"/>
    </ligand>
</feature>
<feature type="binding site" evidence="4">
    <location>
        <position position="121"/>
    </location>
    <ligand>
        <name>GTP</name>
        <dbReference type="ChEBI" id="CHEBI:37565"/>
    </ligand>
</feature>
<feature type="binding site" evidence="4">
    <location>
        <position position="122"/>
    </location>
    <ligand>
        <name>GTP</name>
        <dbReference type="ChEBI" id="CHEBI:37565"/>
    </ligand>
</feature>
<feature type="binding site" evidence="4">
    <location>
        <position position="124"/>
    </location>
    <ligand>
        <name>GTP</name>
        <dbReference type="ChEBI" id="CHEBI:37565"/>
    </ligand>
</feature>
<feature type="binding site" evidence="4">
    <location>
        <position position="151"/>
    </location>
    <ligand>
        <name>GTP</name>
        <dbReference type="ChEBI" id="CHEBI:37565"/>
    </ligand>
</feature>
<feature type="binding site" evidence="4">
    <location>
        <position position="152"/>
    </location>
    <ligand>
        <name>GTP</name>
        <dbReference type="ChEBI" id="CHEBI:37565"/>
    </ligand>
</feature>
<feature type="binding site" evidence="4">
    <location>
        <position position="153"/>
    </location>
    <ligand>
        <name>GTP</name>
        <dbReference type="ChEBI" id="CHEBI:37565"/>
    </ligand>
</feature>
<feature type="modified residue" description="N-acetylmethionine" evidence="4">
    <location>
        <position position="1"/>
    </location>
</feature>
<feature type="modified residue" description="Cysteine methyl ester" evidence="5">
    <location>
        <position position="201"/>
    </location>
</feature>
<feature type="lipid moiety-binding region" description="S-geranylgeranyl cysteine" evidence="1">
    <location>
        <position position="200"/>
    </location>
</feature>
<feature type="lipid moiety-binding region" description="S-geranylgeranyl cysteine" evidence="1">
    <location>
        <position position="201"/>
    </location>
</feature>
<feature type="mutagenesis site" description="Increases the interaction with MTMR6." evidence="7">
    <original>S</original>
    <variation>N</variation>
    <location>
        <position position="22"/>
    </location>
</feature>
<feature type="mutagenesis site" description="No effect on the interaction with MTMR6." evidence="7">
    <original>Q</original>
    <variation>L</variation>
    <location>
        <position position="67"/>
    </location>
</feature>
<proteinExistence type="evidence at protein level"/>
<keyword id="KW-0007">Acetylation</keyword>
<keyword id="KW-0072">Autophagy</keyword>
<keyword id="KW-0963">Cytoplasm</keyword>
<keyword id="KW-0903">Direct protein sequencing</keyword>
<keyword id="KW-0342">GTP-binding</keyword>
<keyword id="KW-0378">Hydrolase</keyword>
<keyword id="KW-0449">Lipoprotein</keyword>
<keyword id="KW-0460">Magnesium</keyword>
<keyword id="KW-0472">Membrane</keyword>
<keyword id="KW-0479">Metal-binding</keyword>
<keyword id="KW-0488">Methylation</keyword>
<keyword id="KW-0547">Nucleotide-binding</keyword>
<keyword id="KW-0597">Phosphoprotein</keyword>
<keyword id="KW-0636">Prenylation</keyword>
<keyword id="KW-0653">Protein transport</keyword>
<keyword id="KW-1185">Reference proteome</keyword>
<keyword id="KW-0813">Transport</keyword>